<sequence length="89" mass="9373">MERVTLALLLLAGLTALEANDPFANKDDPFYYDWKNLQLSGLICGGLLAIAGIAAVLSGKCKCKSSQKQHSPVPEKAIPLITPGSATTC</sequence>
<accession>P59646</accession>
<accession>Q6UWZ1</accession>
<accession>Q7Z4M5</accession>
<proteinExistence type="evidence at protein level"/>
<organism>
    <name type="scientific">Homo sapiens</name>
    <name type="common">Human</name>
    <dbReference type="NCBI Taxonomy" id="9606"/>
    <lineage>
        <taxon>Eukaryota</taxon>
        <taxon>Metazoa</taxon>
        <taxon>Chordata</taxon>
        <taxon>Craniata</taxon>
        <taxon>Vertebrata</taxon>
        <taxon>Euteleostomi</taxon>
        <taxon>Mammalia</taxon>
        <taxon>Eutheria</taxon>
        <taxon>Euarchontoglires</taxon>
        <taxon>Primates</taxon>
        <taxon>Haplorrhini</taxon>
        <taxon>Catarrhini</taxon>
        <taxon>Hominidae</taxon>
        <taxon>Homo</taxon>
    </lineage>
</organism>
<reference key="1">
    <citation type="journal article" date="2003" name="Genome Res.">
        <title>The secreted protein discovery initiative (SPDI), a large-scale effort to identify novel human secreted and transmembrane proteins: a bioinformatics assessment.</title>
        <authorList>
            <person name="Clark H.F."/>
            <person name="Gurney A.L."/>
            <person name="Abaya E."/>
            <person name="Baker K."/>
            <person name="Baldwin D.T."/>
            <person name="Brush J."/>
            <person name="Chen J."/>
            <person name="Chow B."/>
            <person name="Chui C."/>
            <person name="Crowley C."/>
            <person name="Currell B."/>
            <person name="Deuel B."/>
            <person name="Dowd P."/>
            <person name="Eaton D."/>
            <person name="Foster J.S."/>
            <person name="Grimaldi C."/>
            <person name="Gu Q."/>
            <person name="Hass P.E."/>
            <person name="Heldens S."/>
            <person name="Huang A."/>
            <person name="Kim H.S."/>
            <person name="Klimowski L."/>
            <person name="Jin Y."/>
            <person name="Johnson S."/>
            <person name="Lee J."/>
            <person name="Lewis L."/>
            <person name="Liao D."/>
            <person name="Mark M.R."/>
            <person name="Robbie E."/>
            <person name="Sanchez C."/>
            <person name="Schoenfeld J."/>
            <person name="Seshagiri S."/>
            <person name="Simmons L."/>
            <person name="Singh J."/>
            <person name="Smith V."/>
            <person name="Stinson J."/>
            <person name="Vagts A."/>
            <person name="Vandlen R.L."/>
            <person name="Watanabe C."/>
            <person name="Wieand D."/>
            <person name="Woods K."/>
            <person name="Xie M.-H."/>
            <person name="Yansura D.G."/>
            <person name="Yi S."/>
            <person name="Yu G."/>
            <person name="Yuan J."/>
            <person name="Zhang M."/>
            <person name="Zhang Z."/>
            <person name="Goddard A.D."/>
            <person name="Wood W.I."/>
            <person name="Godowski P.J."/>
            <person name="Gray A.M."/>
        </authorList>
    </citation>
    <scope>NUCLEOTIDE SEQUENCE [LARGE SCALE MRNA]</scope>
</reference>
<reference key="2">
    <citation type="journal article" date="2004" name="Nature">
        <title>The DNA sequence and comparative analysis of human chromosome 10.</title>
        <authorList>
            <person name="Deloukas P."/>
            <person name="Earthrowl M.E."/>
            <person name="Grafham D.V."/>
            <person name="Rubenfield M."/>
            <person name="French L."/>
            <person name="Steward C.A."/>
            <person name="Sims S.K."/>
            <person name="Jones M.C."/>
            <person name="Searle S."/>
            <person name="Scott C."/>
            <person name="Howe K."/>
            <person name="Hunt S.E."/>
            <person name="Andrews T.D."/>
            <person name="Gilbert J.G.R."/>
            <person name="Swarbreck D."/>
            <person name="Ashurst J.L."/>
            <person name="Taylor A."/>
            <person name="Battles J."/>
            <person name="Bird C.P."/>
            <person name="Ainscough R."/>
            <person name="Almeida J.P."/>
            <person name="Ashwell R.I.S."/>
            <person name="Ambrose K.D."/>
            <person name="Babbage A.K."/>
            <person name="Bagguley C.L."/>
            <person name="Bailey J."/>
            <person name="Banerjee R."/>
            <person name="Bates K."/>
            <person name="Beasley H."/>
            <person name="Bray-Allen S."/>
            <person name="Brown A.J."/>
            <person name="Brown J.Y."/>
            <person name="Burford D.C."/>
            <person name="Burrill W."/>
            <person name="Burton J."/>
            <person name="Cahill P."/>
            <person name="Camire D."/>
            <person name="Carter N.P."/>
            <person name="Chapman J.C."/>
            <person name="Clark S.Y."/>
            <person name="Clarke G."/>
            <person name="Clee C.M."/>
            <person name="Clegg S."/>
            <person name="Corby N."/>
            <person name="Coulson A."/>
            <person name="Dhami P."/>
            <person name="Dutta I."/>
            <person name="Dunn M."/>
            <person name="Faulkner L."/>
            <person name="Frankish A."/>
            <person name="Frankland J.A."/>
            <person name="Garner P."/>
            <person name="Garnett J."/>
            <person name="Gribble S."/>
            <person name="Griffiths C."/>
            <person name="Grocock R."/>
            <person name="Gustafson E."/>
            <person name="Hammond S."/>
            <person name="Harley J.L."/>
            <person name="Hart E."/>
            <person name="Heath P.D."/>
            <person name="Ho T.P."/>
            <person name="Hopkins B."/>
            <person name="Horne J."/>
            <person name="Howden P.J."/>
            <person name="Huckle E."/>
            <person name="Hynds C."/>
            <person name="Johnson C."/>
            <person name="Johnson D."/>
            <person name="Kana A."/>
            <person name="Kay M."/>
            <person name="Kimberley A.M."/>
            <person name="Kershaw J.K."/>
            <person name="Kokkinaki M."/>
            <person name="Laird G.K."/>
            <person name="Lawlor S."/>
            <person name="Lee H.M."/>
            <person name="Leongamornlert D.A."/>
            <person name="Laird G."/>
            <person name="Lloyd C."/>
            <person name="Lloyd D.M."/>
            <person name="Loveland J."/>
            <person name="Lovell J."/>
            <person name="McLaren S."/>
            <person name="McLay K.E."/>
            <person name="McMurray A."/>
            <person name="Mashreghi-Mohammadi M."/>
            <person name="Matthews L."/>
            <person name="Milne S."/>
            <person name="Nickerson T."/>
            <person name="Nguyen M."/>
            <person name="Overton-Larty E."/>
            <person name="Palmer S.A."/>
            <person name="Pearce A.V."/>
            <person name="Peck A.I."/>
            <person name="Pelan S."/>
            <person name="Phillimore B."/>
            <person name="Porter K."/>
            <person name="Rice C.M."/>
            <person name="Rogosin A."/>
            <person name="Ross M.T."/>
            <person name="Sarafidou T."/>
            <person name="Sehra H.K."/>
            <person name="Shownkeen R."/>
            <person name="Skuce C.D."/>
            <person name="Smith M."/>
            <person name="Standring L."/>
            <person name="Sycamore N."/>
            <person name="Tester J."/>
            <person name="Thorpe A."/>
            <person name="Torcasso W."/>
            <person name="Tracey A."/>
            <person name="Tromans A."/>
            <person name="Tsolas J."/>
            <person name="Wall M."/>
            <person name="Walsh J."/>
            <person name="Wang H."/>
            <person name="Weinstock K."/>
            <person name="West A.P."/>
            <person name="Willey D.L."/>
            <person name="Whitehead S.L."/>
            <person name="Wilming L."/>
            <person name="Wray P.W."/>
            <person name="Young L."/>
            <person name="Chen Y."/>
            <person name="Lovering R.C."/>
            <person name="Moschonas N.K."/>
            <person name="Siebert R."/>
            <person name="Fechtel K."/>
            <person name="Bentley D."/>
            <person name="Durbin R.M."/>
            <person name="Hubbard T."/>
            <person name="Doucette-Stamm L."/>
            <person name="Beck S."/>
            <person name="Smith D.R."/>
            <person name="Rogers J."/>
        </authorList>
    </citation>
    <scope>NUCLEOTIDE SEQUENCE [LARGE SCALE GENOMIC DNA]</scope>
</reference>
<reference key="3">
    <citation type="journal article" date="2004" name="Genome Res.">
        <title>The status, quality, and expansion of the NIH full-length cDNA project: the Mammalian Gene Collection (MGC).</title>
        <authorList>
            <consortium name="The MGC Project Team"/>
        </authorList>
    </citation>
    <scope>NUCLEOTIDE SEQUENCE [LARGE SCALE MRNA]</scope>
    <source>
        <tissue>Kidney</tissue>
    </source>
</reference>
<reference key="4">
    <citation type="journal article" date="2000" name="Genomics">
        <title>The FXYD gene family of small ion transport regulators or channels: cDNA sequence, protein signature sequence, and expression.</title>
        <authorList>
            <person name="Sweadner K.J."/>
            <person name="Rael E."/>
        </authorList>
    </citation>
    <scope>IDENTIFICATION</scope>
</reference>
<protein>
    <recommendedName>
        <fullName>FXYD domain-containing ion transport regulator 4</fullName>
    </recommendedName>
</protein>
<dbReference type="EMBL" id="AY358584">
    <property type="protein sequence ID" value="AAQ88947.1"/>
    <property type="molecule type" value="mRNA"/>
</dbReference>
<dbReference type="EMBL" id="AL512654">
    <property type="status" value="NOT_ANNOTATED_CDS"/>
    <property type="molecule type" value="Genomic_DNA"/>
</dbReference>
<dbReference type="EMBL" id="BC054876">
    <property type="protein sequence ID" value="AAH54876.1"/>
    <property type="molecule type" value="mRNA"/>
</dbReference>
<dbReference type="CCDS" id="CCDS7203.1"/>
<dbReference type="RefSeq" id="NP_001171892.1">
    <property type="nucleotide sequence ID" value="NM_001184963.1"/>
</dbReference>
<dbReference type="RefSeq" id="NP_775183.1">
    <property type="nucleotide sequence ID" value="NM_173160.3"/>
</dbReference>
<dbReference type="SMR" id="P59646"/>
<dbReference type="ComplexPortal" id="CPX-8142">
    <property type="entry name" value="Sodium:potassium-exchanging ATPase complex, FXYD4 variant"/>
</dbReference>
<dbReference type="FunCoup" id="P59646">
    <property type="interactions" value="156"/>
</dbReference>
<dbReference type="IntAct" id="P59646">
    <property type="interactions" value="1"/>
</dbReference>
<dbReference type="STRING" id="9606.ENSP00000473361"/>
<dbReference type="TCDB" id="1.A.27.1.6">
    <property type="family name" value="the phospholemman (plm) family"/>
</dbReference>
<dbReference type="PhosphoSitePlus" id="P59646"/>
<dbReference type="BioMuta" id="FXYD4"/>
<dbReference type="DMDM" id="114152806"/>
<dbReference type="MassIVE" id="P59646"/>
<dbReference type="PaxDb" id="9606-ENSP00000483791"/>
<dbReference type="PeptideAtlas" id="P59646"/>
<dbReference type="Antibodypedia" id="2752">
    <property type="antibodies" value="25 antibodies from 15 providers"/>
</dbReference>
<dbReference type="DNASU" id="53828"/>
<dbReference type="Ensembl" id="ENST00000476166.6">
    <property type="protein sequence ID" value="ENSP00000473361.1"/>
    <property type="gene ID" value="ENSG00000150201.15"/>
</dbReference>
<dbReference type="Ensembl" id="ENST00000616495.1">
    <property type="protein sequence ID" value="ENSP00000483791.1"/>
    <property type="gene ID" value="ENSG00000150201.15"/>
</dbReference>
<dbReference type="GeneID" id="53828"/>
<dbReference type="KEGG" id="hsa:53828"/>
<dbReference type="MANE-Select" id="ENST00000476166.6">
    <property type="protein sequence ID" value="ENSP00000473361.1"/>
    <property type="RefSeq nucleotide sequence ID" value="NM_173160.3"/>
    <property type="RefSeq protein sequence ID" value="NP_775183.1"/>
</dbReference>
<dbReference type="UCSC" id="uc001jaq.2">
    <property type="organism name" value="human"/>
</dbReference>
<dbReference type="AGR" id="HGNC:4028"/>
<dbReference type="CTD" id="53828"/>
<dbReference type="DisGeNET" id="53828"/>
<dbReference type="GeneCards" id="FXYD4"/>
<dbReference type="HGNC" id="HGNC:4028">
    <property type="gene designation" value="FXYD4"/>
</dbReference>
<dbReference type="HPA" id="ENSG00000150201">
    <property type="expression patterns" value="Tissue enriched (kidney)"/>
</dbReference>
<dbReference type="neXtProt" id="NX_P59646"/>
<dbReference type="OpenTargets" id="ENSG00000150201"/>
<dbReference type="PharmGKB" id="PA28444"/>
<dbReference type="VEuPathDB" id="HostDB:ENSG00000150201"/>
<dbReference type="eggNOG" id="ENOG502TDGY">
    <property type="taxonomic scope" value="Eukaryota"/>
</dbReference>
<dbReference type="GeneTree" id="ENSGT00940000153062"/>
<dbReference type="HOGENOM" id="CLU_171208_0_1_1"/>
<dbReference type="InParanoid" id="P59646"/>
<dbReference type="OMA" id="QLGGMIC"/>
<dbReference type="PAN-GO" id="P59646">
    <property type="GO annotations" value="2 GO annotations based on evolutionary models"/>
</dbReference>
<dbReference type="PhylomeDB" id="P59646"/>
<dbReference type="TreeFam" id="TF333443"/>
<dbReference type="PathwayCommons" id="P59646"/>
<dbReference type="Reactome" id="R-HSA-5578775">
    <property type="pathway name" value="Ion homeostasis"/>
</dbReference>
<dbReference type="Reactome" id="R-HSA-936837">
    <property type="pathway name" value="Ion transport by P-type ATPases"/>
</dbReference>
<dbReference type="Reactome" id="R-HSA-9679191">
    <property type="pathway name" value="Potential therapeutics for SARS"/>
</dbReference>
<dbReference type="BioGRID-ORCS" id="53828">
    <property type="hits" value="12 hits in 1136 CRISPR screens"/>
</dbReference>
<dbReference type="GenomeRNAi" id="53828"/>
<dbReference type="Pharos" id="P59646">
    <property type="development level" value="Tdark"/>
</dbReference>
<dbReference type="PRO" id="PR:P59646"/>
<dbReference type="Proteomes" id="UP000005640">
    <property type="component" value="Chromosome 10"/>
</dbReference>
<dbReference type="RNAct" id="P59646">
    <property type="molecule type" value="protein"/>
</dbReference>
<dbReference type="Bgee" id="ENSG00000150201">
    <property type="expression patterns" value="Expressed in metanephros cortex and 93 other cell types or tissues"/>
</dbReference>
<dbReference type="GO" id="GO:0016323">
    <property type="term" value="C:basolateral plasma membrane"/>
    <property type="evidence" value="ECO:0000250"/>
    <property type="project" value="UniProtKB"/>
</dbReference>
<dbReference type="GO" id="GO:0005886">
    <property type="term" value="C:plasma membrane"/>
    <property type="evidence" value="ECO:0000304"/>
    <property type="project" value="Reactome"/>
</dbReference>
<dbReference type="GO" id="GO:0005890">
    <property type="term" value="C:sodium:potassium-exchanging ATPase complex"/>
    <property type="evidence" value="ECO:0000250"/>
    <property type="project" value="UniProtKB"/>
</dbReference>
<dbReference type="GO" id="GO:0051117">
    <property type="term" value="F:ATPase binding"/>
    <property type="evidence" value="ECO:0007669"/>
    <property type="project" value="Ensembl"/>
</dbReference>
<dbReference type="GO" id="GO:0017080">
    <property type="term" value="F:sodium channel regulator activity"/>
    <property type="evidence" value="ECO:0000250"/>
    <property type="project" value="UniProtKB"/>
</dbReference>
<dbReference type="GO" id="GO:1903278">
    <property type="term" value="P:positive regulation of sodium ion export across plasma membrane"/>
    <property type="evidence" value="ECO:0000318"/>
    <property type="project" value="GO_Central"/>
</dbReference>
<dbReference type="GO" id="GO:0071805">
    <property type="term" value="P:potassium ion transmembrane transport"/>
    <property type="evidence" value="ECO:0007669"/>
    <property type="project" value="InterPro"/>
</dbReference>
<dbReference type="GO" id="GO:0006814">
    <property type="term" value="P:sodium ion transport"/>
    <property type="evidence" value="ECO:0007669"/>
    <property type="project" value="UniProtKB-KW"/>
</dbReference>
<dbReference type="CDD" id="cd20322">
    <property type="entry name" value="FXYD4"/>
    <property type="match status" value="1"/>
</dbReference>
<dbReference type="FunFam" id="1.20.5.780:FF:000007">
    <property type="entry name" value="FXYD domain-containing ion transport regulator"/>
    <property type="match status" value="1"/>
</dbReference>
<dbReference type="Gene3D" id="1.20.5.780">
    <property type="entry name" value="Single helix bin"/>
    <property type="match status" value="1"/>
</dbReference>
<dbReference type="InterPro" id="IPR047283">
    <property type="entry name" value="FXYD4"/>
</dbReference>
<dbReference type="InterPro" id="IPR047297">
    <property type="entry name" value="FXYD_motif"/>
</dbReference>
<dbReference type="InterPro" id="IPR000272">
    <property type="entry name" value="Ion-transport_regulator_FXYD"/>
</dbReference>
<dbReference type="PANTHER" id="PTHR14132:SF10">
    <property type="entry name" value="FXYD DOMAIN-CONTAINING ION TRANSPORT REGULATOR 4"/>
    <property type="match status" value="1"/>
</dbReference>
<dbReference type="PANTHER" id="PTHR14132">
    <property type="entry name" value="SODIUM/POTASSIUM-TRANSPORTING ATPASE SUBUNIT GAMMA"/>
    <property type="match status" value="1"/>
</dbReference>
<dbReference type="Pfam" id="PF02038">
    <property type="entry name" value="ATP1G1_PLM_MAT8"/>
    <property type="match status" value="1"/>
</dbReference>
<dbReference type="PROSITE" id="PS01310">
    <property type="entry name" value="FXYD"/>
    <property type="match status" value="1"/>
</dbReference>
<evidence type="ECO:0000250" key="1">
    <source>
        <dbReference type="UniProtKB" id="Q63113"/>
    </source>
</evidence>
<evidence type="ECO:0000255" key="2"/>
<evidence type="ECO:0000305" key="3"/>
<name>FXYD4_HUMAN</name>
<comment type="function">
    <text evidence="1">Associates with and regulates the activity of the sodium/potassium-transporting ATPase (NKA) which catalyzes the hydrolysis of ATP coupled with the exchange of Na(+) and K(+) ions across the plasma membrane (By similarity). Increases the apparent affinity of the transporter for Na(+) and increases NKA activity (By similarity).</text>
</comment>
<comment type="subunit">
    <text evidence="1">Regulatory subunit of the sodium/potassium-transporting ATPase which is composed of a catalytic alpha subunit, a non-catalytic beta subunit and a regulatory subunit. The regulatory subunit, a member of the FXYD protein family, modulates the enzymatic activity in a tissue- and isoform-specific way by changing affinities of the Na+/K+-ATPase toward Na(+), K(+) or ATP.</text>
</comment>
<comment type="subcellular location">
    <subcellularLocation>
        <location evidence="1">Cell membrane</location>
        <topology evidence="1">Single-pass type I membrane protein</topology>
    </subcellularLocation>
    <subcellularLocation>
        <location evidence="1">Basolateral cell membrane</location>
        <topology evidence="1">Single-pass type I membrane protein</topology>
    </subcellularLocation>
    <text evidence="1">Detected in the basolateral membrane of collecting duct principal cells.</text>
</comment>
<comment type="similarity">
    <text evidence="3">Belongs to the FXYD family.</text>
</comment>
<keyword id="KW-1003">Cell membrane</keyword>
<keyword id="KW-0406">Ion transport</keyword>
<keyword id="KW-0472">Membrane</keyword>
<keyword id="KW-0630">Potassium</keyword>
<keyword id="KW-0633">Potassium transport</keyword>
<keyword id="KW-1267">Proteomics identification</keyword>
<keyword id="KW-1185">Reference proteome</keyword>
<keyword id="KW-0732">Signal</keyword>
<keyword id="KW-0915">Sodium</keyword>
<keyword id="KW-0739">Sodium transport</keyword>
<keyword id="KW-0740">Sodium/potassium transport</keyword>
<keyword id="KW-0812">Transmembrane</keyword>
<keyword id="KW-1133">Transmembrane helix</keyword>
<keyword id="KW-0813">Transport</keyword>
<gene>
    <name type="primary">FXYD4</name>
    <name type="ORF">UNQ526/PRO1069</name>
</gene>
<feature type="signal peptide" evidence="2">
    <location>
        <begin position="1"/>
        <end position="20"/>
    </location>
</feature>
<feature type="chain" id="PRO_0000010366" description="FXYD domain-containing ion transport regulator 4">
    <location>
        <begin position="21"/>
        <end position="89"/>
    </location>
</feature>
<feature type="topological domain" description="Extracellular" evidence="2">
    <location>
        <begin position="21"/>
        <end position="38"/>
    </location>
</feature>
<feature type="transmembrane region" description="Helical" evidence="1">
    <location>
        <begin position="39"/>
        <end position="59"/>
    </location>
</feature>
<feature type="topological domain" description="Cytoplasmic" evidence="2">
    <location>
        <begin position="60"/>
        <end position="89"/>
    </location>
</feature>
<feature type="sequence conflict" description="In Ref. 1; AAQ88947." evidence="3" ref="1">
    <original>C</original>
    <variation>Y</variation>
    <location>
        <position position="63"/>
    </location>
</feature>